<name>YDHF_LACLA</name>
<evidence type="ECO:0000255" key="1"/>
<evidence type="ECO:0000305" key="2"/>
<protein>
    <recommendedName>
        <fullName>UPF0324 membrane protein YdhF</fullName>
    </recommendedName>
</protein>
<proteinExistence type="inferred from homology"/>
<reference key="1">
    <citation type="journal article" date="2001" name="Genome Res.">
        <title>The complete genome sequence of the lactic acid bacterium Lactococcus lactis ssp. lactis IL1403.</title>
        <authorList>
            <person name="Bolotin A."/>
            <person name="Wincker P."/>
            <person name="Mauger S."/>
            <person name="Jaillon O."/>
            <person name="Malarme K."/>
            <person name="Weissenbach J."/>
            <person name="Ehrlich S.D."/>
            <person name="Sorokin A."/>
        </authorList>
    </citation>
    <scope>NUCLEOTIDE SEQUENCE [LARGE SCALE GENOMIC DNA]</scope>
    <source>
        <strain>IL1403</strain>
    </source>
</reference>
<feature type="chain" id="PRO_0000157423" description="UPF0324 membrane protein YdhF">
    <location>
        <begin position="1"/>
        <end position="331"/>
    </location>
</feature>
<feature type="transmembrane region" description="Helical" evidence="1">
    <location>
        <begin position="2"/>
        <end position="20"/>
    </location>
</feature>
<feature type="transmembrane region" description="Helical" evidence="1">
    <location>
        <begin position="24"/>
        <end position="46"/>
    </location>
</feature>
<feature type="transmembrane region" description="Helical" evidence="1">
    <location>
        <begin position="82"/>
        <end position="104"/>
    </location>
</feature>
<feature type="transmembrane region" description="Helical" evidence="1">
    <location>
        <begin position="114"/>
        <end position="136"/>
    </location>
</feature>
<feature type="transmembrane region" description="Helical" evidence="1">
    <location>
        <begin position="148"/>
        <end position="170"/>
    </location>
</feature>
<feature type="transmembrane region" description="Helical" evidence="1">
    <location>
        <begin position="204"/>
        <end position="226"/>
    </location>
</feature>
<feature type="transmembrane region" description="Helical" evidence="1">
    <location>
        <begin position="247"/>
        <end position="269"/>
    </location>
</feature>
<feature type="transmembrane region" description="Helical" evidence="1">
    <location>
        <begin position="308"/>
        <end position="330"/>
    </location>
</feature>
<sequence length="331" mass="35889">MSILPGFLLSFAIAIVSYLLNRFIFHSLGSATIAILLGIILGNLYFKQVTLFAGTAWSEKKLLEFSVMFLGATVTFQTIGKLGFSGVGFILIQMISTIIFVLFMGKKLGFSANVSALMASGNAVCGSSAIAAVEPVIGAETSEKRTSIAMVNLMGTILMLSLPFLGTWMFGNNDLLRGALIGGTEQSVGQVVASATMVNPNTTTLATLFKIMRIIMLVFVVLYFGFRSKKQKRNEQGPTQIKIKRNSFLPWYVLGFLVLCTLDTLIHFVPEVSATAKFLSGWCETIALAAIGLRLNLVEFIKAGKKLLIYGLSTLVFQVVLALILISLLIK</sequence>
<keyword id="KW-1003">Cell membrane</keyword>
<keyword id="KW-0472">Membrane</keyword>
<keyword id="KW-1185">Reference proteome</keyword>
<keyword id="KW-0812">Transmembrane</keyword>
<keyword id="KW-1133">Transmembrane helix</keyword>
<accession>Q9CII5</accession>
<comment type="subcellular location">
    <subcellularLocation>
        <location evidence="2">Cell membrane</location>
        <topology evidence="2">Multi-pass membrane protein</topology>
    </subcellularLocation>
</comment>
<comment type="similarity">
    <text evidence="2">Belongs to the UPF0324 family.</text>
</comment>
<gene>
    <name type="primary">ydhF</name>
    <name type="ordered locus">LL0375</name>
    <name type="ORF">L178384</name>
</gene>
<dbReference type="EMBL" id="AE005176">
    <property type="protein sequence ID" value="AAK04473.1"/>
    <property type="molecule type" value="Genomic_DNA"/>
</dbReference>
<dbReference type="PIR" id="G86671">
    <property type="entry name" value="G86671"/>
</dbReference>
<dbReference type="RefSeq" id="NP_266531.1">
    <property type="nucleotide sequence ID" value="NC_002662.1"/>
</dbReference>
<dbReference type="RefSeq" id="WP_010905308.1">
    <property type="nucleotide sequence ID" value="NC_002662.1"/>
</dbReference>
<dbReference type="PaxDb" id="272623-L178384"/>
<dbReference type="EnsemblBacteria" id="AAK04473">
    <property type="protein sequence ID" value="AAK04473"/>
    <property type="gene ID" value="L178384"/>
</dbReference>
<dbReference type="KEGG" id="lla:L178384"/>
<dbReference type="PATRIC" id="fig|272623.7.peg.409"/>
<dbReference type="eggNOG" id="COG2855">
    <property type="taxonomic scope" value="Bacteria"/>
</dbReference>
<dbReference type="HOGENOM" id="CLU_033541_3_0_9"/>
<dbReference type="OrthoDB" id="9811391at2"/>
<dbReference type="Proteomes" id="UP000002196">
    <property type="component" value="Chromosome"/>
</dbReference>
<dbReference type="GO" id="GO:0005886">
    <property type="term" value="C:plasma membrane"/>
    <property type="evidence" value="ECO:0007669"/>
    <property type="project" value="UniProtKB-SubCell"/>
</dbReference>
<dbReference type="InterPro" id="IPR018383">
    <property type="entry name" value="UPF0324_pro"/>
</dbReference>
<dbReference type="PANTHER" id="PTHR30106">
    <property type="entry name" value="INNER MEMBRANE PROTEIN YEIH-RELATED"/>
    <property type="match status" value="1"/>
</dbReference>
<dbReference type="PANTHER" id="PTHR30106:SF1">
    <property type="entry name" value="UPF0324 MEMBRANE PROTEIN FN0533"/>
    <property type="match status" value="1"/>
</dbReference>
<dbReference type="Pfam" id="PF03601">
    <property type="entry name" value="Cons_hypoth698"/>
    <property type="match status" value="1"/>
</dbReference>
<organism>
    <name type="scientific">Lactococcus lactis subsp. lactis (strain IL1403)</name>
    <name type="common">Streptococcus lactis</name>
    <dbReference type="NCBI Taxonomy" id="272623"/>
    <lineage>
        <taxon>Bacteria</taxon>
        <taxon>Bacillati</taxon>
        <taxon>Bacillota</taxon>
        <taxon>Bacilli</taxon>
        <taxon>Lactobacillales</taxon>
        <taxon>Streptococcaceae</taxon>
        <taxon>Lactococcus</taxon>
    </lineage>
</organism>